<keyword id="KW-0046">Antibiotic resistance</keyword>
<keyword id="KW-0997">Cell inner membrane</keyword>
<keyword id="KW-1003">Cell membrane</keyword>
<keyword id="KW-0472">Membrane</keyword>
<keyword id="KW-1185">Reference proteome</keyword>
<keyword id="KW-0812">Transmembrane</keyword>
<keyword id="KW-1133">Transmembrane helix</keyword>
<keyword id="KW-0813">Transport</keyword>
<name>EMRB_ECOLI</name>
<dbReference type="EMBL" id="M86657">
    <property type="protein sequence ID" value="AAA23725.1"/>
    <property type="molecule type" value="Genomic_DNA"/>
</dbReference>
<dbReference type="EMBL" id="U00096">
    <property type="protein sequence ID" value="AAC75733.1"/>
    <property type="molecule type" value="Genomic_DNA"/>
</dbReference>
<dbReference type="EMBL" id="AP009048">
    <property type="protein sequence ID" value="BAA16548.1"/>
    <property type="molecule type" value="Genomic_DNA"/>
</dbReference>
<dbReference type="PIR" id="G65048">
    <property type="entry name" value="G65048"/>
</dbReference>
<dbReference type="RefSeq" id="NP_417171.1">
    <property type="nucleotide sequence ID" value="NC_000913.3"/>
</dbReference>
<dbReference type="RefSeq" id="WP_001295176.1">
    <property type="nucleotide sequence ID" value="NZ_STEB01000042.1"/>
</dbReference>
<dbReference type="SMR" id="P0AEJ0"/>
<dbReference type="BioGRID" id="4263179">
    <property type="interactions" value="251"/>
</dbReference>
<dbReference type="ComplexPortal" id="CPX-4268">
    <property type="entry name" value="EmrAB-TolC multidrug efflux transport system"/>
</dbReference>
<dbReference type="FunCoup" id="P0AEJ0">
    <property type="interactions" value="256"/>
</dbReference>
<dbReference type="IntAct" id="P0AEJ0">
    <property type="interactions" value="1"/>
</dbReference>
<dbReference type="STRING" id="511145.b2686"/>
<dbReference type="CARD" id="ARO:3000074">
    <property type="molecule name" value="emrB"/>
    <property type="mechanism identifier" value="ARO:0010000"/>
    <property type="mechanism name" value="antibiotic efflux"/>
</dbReference>
<dbReference type="TCDB" id="2.A.1.3.2">
    <property type="family name" value="the major facilitator superfamily (mfs)"/>
</dbReference>
<dbReference type="PaxDb" id="511145-b2686"/>
<dbReference type="EnsemblBacteria" id="AAC75733">
    <property type="protein sequence ID" value="AAC75733"/>
    <property type="gene ID" value="b2686"/>
</dbReference>
<dbReference type="GeneID" id="93779325"/>
<dbReference type="GeneID" id="947167"/>
<dbReference type="KEGG" id="ecj:JW2661"/>
<dbReference type="KEGG" id="eco:b2686"/>
<dbReference type="KEGG" id="ecoc:C3026_14790"/>
<dbReference type="PATRIC" id="fig|1411691.4.peg.4053"/>
<dbReference type="EchoBASE" id="EB1409"/>
<dbReference type="eggNOG" id="COG2814">
    <property type="taxonomic scope" value="Bacteria"/>
</dbReference>
<dbReference type="HOGENOM" id="CLU_000960_28_0_6"/>
<dbReference type="InParanoid" id="P0AEJ0"/>
<dbReference type="OMA" id="HKLHNNL"/>
<dbReference type="OrthoDB" id="9812221at2"/>
<dbReference type="PhylomeDB" id="P0AEJ0"/>
<dbReference type="BioCyc" id="EcoCyc:EMRB-MONOMER"/>
<dbReference type="BioCyc" id="MetaCyc:EMRB-MONOMER"/>
<dbReference type="PRO" id="PR:P0AEJ0"/>
<dbReference type="Proteomes" id="UP000000625">
    <property type="component" value="Chromosome"/>
</dbReference>
<dbReference type="GO" id="GO:1990281">
    <property type="term" value="C:efflux pump complex"/>
    <property type="evidence" value="ECO:0000303"/>
    <property type="project" value="ComplexPortal"/>
</dbReference>
<dbReference type="GO" id="GO:0098567">
    <property type="term" value="C:periplasmic side of plasma membrane"/>
    <property type="evidence" value="ECO:0000303"/>
    <property type="project" value="ComplexPortal"/>
</dbReference>
<dbReference type="GO" id="GO:0005886">
    <property type="term" value="C:plasma membrane"/>
    <property type="evidence" value="ECO:0000314"/>
    <property type="project" value="EcoCyc"/>
</dbReference>
<dbReference type="GO" id="GO:0015125">
    <property type="term" value="F:bile acid transmembrane transporter activity"/>
    <property type="evidence" value="ECO:0000269"/>
    <property type="project" value="EcoCyc"/>
</dbReference>
<dbReference type="GO" id="GO:0022857">
    <property type="term" value="F:transmembrane transporter activity"/>
    <property type="evidence" value="ECO:0000318"/>
    <property type="project" value="GO_Central"/>
</dbReference>
<dbReference type="GO" id="GO:0015721">
    <property type="term" value="P:bile acid and bile salt transport"/>
    <property type="evidence" value="ECO:0000269"/>
    <property type="project" value="EcoCyc"/>
</dbReference>
<dbReference type="GO" id="GO:0046677">
    <property type="term" value="P:response to antibiotic"/>
    <property type="evidence" value="ECO:0007669"/>
    <property type="project" value="UniProtKB-KW"/>
</dbReference>
<dbReference type="GO" id="GO:0048545">
    <property type="term" value="P:response to steroid hormone"/>
    <property type="evidence" value="ECO:0000269"/>
    <property type="project" value="EcoCyc"/>
</dbReference>
<dbReference type="GO" id="GO:0009636">
    <property type="term" value="P:response to toxic substance"/>
    <property type="evidence" value="ECO:0000315"/>
    <property type="project" value="EcoCyc"/>
</dbReference>
<dbReference type="GO" id="GO:0055085">
    <property type="term" value="P:transmembrane transport"/>
    <property type="evidence" value="ECO:0000318"/>
    <property type="project" value="GO_Central"/>
</dbReference>
<dbReference type="GO" id="GO:0140330">
    <property type="term" value="P:xenobiotic detoxification by transmembrane export across the cell outer membrane"/>
    <property type="evidence" value="ECO:0000303"/>
    <property type="project" value="ComplexPortal"/>
</dbReference>
<dbReference type="GO" id="GO:1990961">
    <property type="term" value="P:xenobiotic detoxification by transmembrane export across the plasma membrane"/>
    <property type="evidence" value="ECO:0000315"/>
    <property type="project" value="EcoCyc"/>
</dbReference>
<dbReference type="CDD" id="cd17503">
    <property type="entry name" value="MFS_LmrB_MDR_like"/>
    <property type="match status" value="1"/>
</dbReference>
<dbReference type="FunFam" id="1.20.1250.20:FF:000019">
    <property type="entry name" value="Multidrug resistance protein B"/>
    <property type="match status" value="1"/>
</dbReference>
<dbReference type="FunFam" id="1.20.1720.10:FF:000002">
    <property type="entry name" value="Multidrug resistance protein B"/>
    <property type="match status" value="1"/>
</dbReference>
<dbReference type="Gene3D" id="1.20.1250.20">
    <property type="entry name" value="MFS general substrate transporter like domains"/>
    <property type="match status" value="1"/>
</dbReference>
<dbReference type="Gene3D" id="1.20.1720.10">
    <property type="entry name" value="Multidrug resistance protein D"/>
    <property type="match status" value="1"/>
</dbReference>
<dbReference type="InterPro" id="IPR004638">
    <property type="entry name" value="EmrB-like"/>
</dbReference>
<dbReference type="InterPro" id="IPR011701">
    <property type="entry name" value="MFS"/>
</dbReference>
<dbReference type="InterPro" id="IPR020846">
    <property type="entry name" value="MFS_dom"/>
</dbReference>
<dbReference type="InterPro" id="IPR036259">
    <property type="entry name" value="MFS_trans_sf"/>
</dbReference>
<dbReference type="NCBIfam" id="TIGR00711">
    <property type="entry name" value="efflux_EmrB"/>
    <property type="match status" value="1"/>
</dbReference>
<dbReference type="NCBIfam" id="NF000391">
    <property type="entry name" value="EmrB"/>
    <property type="match status" value="1"/>
</dbReference>
<dbReference type="PANTHER" id="PTHR42718">
    <property type="entry name" value="MAJOR FACILITATOR SUPERFAMILY MULTIDRUG TRANSPORTER MFSC"/>
    <property type="match status" value="1"/>
</dbReference>
<dbReference type="PANTHER" id="PTHR42718:SF9">
    <property type="entry name" value="MAJOR FACILITATOR SUPERFAMILY MULTIDRUG TRANSPORTER MFSC"/>
    <property type="match status" value="1"/>
</dbReference>
<dbReference type="Pfam" id="PF07690">
    <property type="entry name" value="MFS_1"/>
    <property type="match status" value="1"/>
</dbReference>
<dbReference type="SUPFAM" id="SSF103473">
    <property type="entry name" value="MFS general substrate transporter"/>
    <property type="match status" value="1"/>
</dbReference>
<dbReference type="PROSITE" id="PS50850">
    <property type="entry name" value="MFS"/>
    <property type="match status" value="1"/>
</dbReference>
<feature type="chain" id="PRO_0000173322" description="Multidrug export protein EmrB">
    <location>
        <begin position="1"/>
        <end position="512"/>
    </location>
</feature>
<feature type="topological domain" description="Cytoplasmic" evidence="1">
    <location>
        <begin position="1"/>
        <end position="12"/>
    </location>
</feature>
<feature type="transmembrane region" description="Helical" evidence="1">
    <location>
        <begin position="13"/>
        <end position="38"/>
    </location>
</feature>
<feature type="topological domain" description="Extracellular" evidence="1">
    <location>
        <begin position="39"/>
        <end position="51"/>
    </location>
</feature>
<feature type="transmembrane region" description="Helical" evidence="1">
    <location>
        <begin position="52"/>
        <end position="72"/>
    </location>
</feature>
<feature type="topological domain" description="Cytoplasmic" evidence="1">
    <location>
        <begin position="73"/>
        <end position="81"/>
    </location>
</feature>
<feature type="transmembrane region" description="Helical" evidence="1">
    <location>
        <begin position="82"/>
        <end position="100"/>
    </location>
</feature>
<feature type="topological domain" description="Extracellular" evidence="1">
    <location>
        <begin position="101"/>
        <end position="109"/>
    </location>
</feature>
<feature type="transmembrane region" description="Helical" evidence="1">
    <location>
        <begin position="110"/>
        <end position="128"/>
    </location>
</feature>
<feature type="topological domain" description="Cytoplasmic" evidence="1">
    <location>
        <begin position="129"/>
        <end position="136"/>
    </location>
</feature>
<feature type="transmembrane region" description="Helical" evidence="1">
    <location>
        <begin position="137"/>
        <end position="159"/>
    </location>
</feature>
<feature type="topological domain" description="Extracellular" evidence="1">
    <location>
        <begin position="160"/>
        <end position="164"/>
    </location>
</feature>
<feature type="transmembrane region" description="Helical" evidence="1">
    <location>
        <begin position="165"/>
        <end position="189"/>
    </location>
</feature>
<feature type="topological domain" description="Cytoplasmic" evidence="1">
    <location>
        <begin position="190"/>
        <end position="202"/>
    </location>
</feature>
<feature type="transmembrane region" description="Helical" evidence="1">
    <location>
        <begin position="203"/>
        <end position="223"/>
    </location>
</feature>
<feature type="topological domain" description="Extracellular" evidence="1">
    <location>
        <begin position="224"/>
        <end position="233"/>
    </location>
</feature>
<feature type="transmembrane region" description="Helical" evidence="1">
    <location>
        <begin position="234"/>
        <end position="249"/>
    </location>
</feature>
<feature type="topological domain" description="Cytoplasmic" evidence="1">
    <location>
        <begin position="250"/>
        <end position="271"/>
    </location>
</feature>
<feature type="transmembrane region" description="Helical" evidence="1">
    <location>
        <begin position="272"/>
        <end position="295"/>
    </location>
</feature>
<feature type="topological domain" description="Extracellular" evidence="1">
    <location>
        <begin position="296"/>
        <end position="305"/>
    </location>
</feature>
<feature type="transmembrane region" description="Helical" evidence="1">
    <location>
        <begin position="306"/>
        <end position="329"/>
    </location>
</feature>
<feature type="topological domain" description="Cytoplasmic" evidence="1">
    <location>
        <begin position="330"/>
        <end position="335"/>
    </location>
</feature>
<feature type="transmembrane region" description="Helical" evidence="1">
    <location>
        <begin position="336"/>
        <end position="355"/>
    </location>
</feature>
<feature type="topological domain" description="Extracellular" evidence="1">
    <location>
        <begin position="356"/>
        <end position="363"/>
    </location>
</feature>
<feature type="transmembrane region" description="Helical" evidence="1">
    <location>
        <begin position="364"/>
        <end position="387"/>
    </location>
</feature>
<feature type="topological domain" description="Cytoplasmic" evidence="1">
    <location>
        <begin position="388"/>
        <end position="407"/>
    </location>
</feature>
<feature type="transmembrane region" description="Helical" evidence="1">
    <location>
        <begin position="408"/>
        <end position="428"/>
    </location>
</feature>
<feature type="topological domain" description="Extracellular" evidence="1">
    <location>
        <begin position="429"/>
        <end position="481"/>
    </location>
</feature>
<feature type="transmembrane region" description="Helical" evidence="1">
    <location>
        <begin position="482"/>
        <end position="504"/>
    </location>
</feature>
<feature type="topological domain" description="Cytoplasmic" evidence="1">
    <location>
        <begin position="505"/>
        <end position="512"/>
    </location>
</feature>
<feature type="sequence conflict" description="In Ref. 1; AAA23725." evidence="6" ref="1">
    <original>G</original>
    <variation>A</variation>
    <location>
        <position position="325"/>
    </location>
</feature>
<feature type="sequence conflict" description="In Ref. 1; AAA23725." evidence="6" ref="1">
    <original>P</original>
    <variation>A</variation>
    <location>
        <position position="501"/>
    </location>
</feature>
<protein>
    <recommendedName>
        <fullName>Multidrug export protein EmrB</fullName>
    </recommendedName>
</protein>
<gene>
    <name type="primary">emrB</name>
    <name type="ordered locus">b2686</name>
    <name type="ordered locus">JW2661</name>
</gene>
<evidence type="ECO:0000255" key="1"/>
<evidence type="ECO:0000269" key="2">
    <source>
    </source>
</evidence>
<evidence type="ECO:0000269" key="3">
    <source>
    </source>
</evidence>
<evidence type="ECO:0000269" key="4">
    <source>
    </source>
</evidence>
<evidence type="ECO:0000269" key="5">
    <source>
    </source>
</evidence>
<evidence type="ECO:0000305" key="6"/>
<organism>
    <name type="scientific">Escherichia coli (strain K12)</name>
    <dbReference type="NCBI Taxonomy" id="83333"/>
    <lineage>
        <taxon>Bacteria</taxon>
        <taxon>Pseudomonadati</taxon>
        <taxon>Pseudomonadota</taxon>
        <taxon>Gammaproteobacteria</taxon>
        <taxon>Enterobacterales</taxon>
        <taxon>Enterobacteriaceae</taxon>
        <taxon>Escherichia</taxon>
    </lineage>
</organism>
<reference key="1">
    <citation type="journal article" date="1992" name="Proc. Natl. Acad. Sci. U.S.A.">
        <title>Emr, an Escherichia coli locus for multidrug resistance.</title>
        <authorList>
            <person name="Lomovskaya O."/>
            <person name="Lewis K."/>
        </authorList>
    </citation>
    <scope>NUCLEOTIDE SEQUENCE [GENOMIC DNA]</scope>
    <scope>FUNCTION</scope>
</reference>
<reference key="2">
    <citation type="journal article" date="1997" name="DNA Res.">
        <title>Construction of a contiguous 874-kb sequence of the Escherichia coli-K12 genome corresponding to 50.0-68.8 min on the linkage map and analysis of its sequence features.</title>
        <authorList>
            <person name="Yamamoto Y."/>
            <person name="Aiba H."/>
            <person name="Baba T."/>
            <person name="Hayashi K."/>
            <person name="Inada T."/>
            <person name="Isono K."/>
            <person name="Itoh T."/>
            <person name="Kimura S."/>
            <person name="Kitagawa M."/>
            <person name="Makino K."/>
            <person name="Miki T."/>
            <person name="Mitsuhashi N."/>
            <person name="Mizobuchi K."/>
            <person name="Mori H."/>
            <person name="Nakade S."/>
            <person name="Nakamura Y."/>
            <person name="Nashimoto H."/>
            <person name="Oshima T."/>
            <person name="Oyama S."/>
            <person name="Saito N."/>
            <person name="Sampei G."/>
            <person name="Satoh Y."/>
            <person name="Sivasundaram S."/>
            <person name="Tagami H."/>
            <person name="Takahashi H."/>
            <person name="Takeda J."/>
            <person name="Takemoto K."/>
            <person name="Uehara K."/>
            <person name="Wada C."/>
            <person name="Yamagata S."/>
            <person name="Horiuchi T."/>
        </authorList>
    </citation>
    <scope>NUCLEOTIDE SEQUENCE [LARGE SCALE GENOMIC DNA]</scope>
    <source>
        <strain>K12 / W3110 / ATCC 27325 / DSM 5911</strain>
    </source>
</reference>
<reference key="3">
    <citation type="journal article" date="1997" name="Science">
        <title>The complete genome sequence of Escherichia coli K-12.</title>
        <authorList>
            <person name="Blattner F.R."/>
            <person name="Plunkett G. III"/>
            <person name="Bloch C.A."/>
            <person name="Perna N.T."/>
            <person name="Burland V."/>
            <person name="Riley M."/>
            <person name="Collado-Vides J."/>
            <person name="Glasner J.D."/>
            <person name="Rode C.K."/>
            <person name="Mayhew G.F."/>
            <person name="Gregor J."/>
            <person name="Davis N.W."/>
            <person name="Kirkpatrick H.A."/>
            <person name="Goeden M.A."/>
            <person name="Rose D.J."/>
            <person name="Mau B."/>
            <person name="Shao Y."/>
        </authorList>
    </citation>
    <scope>NUCLEOTIDE SEQUENCE [LARGE SCALE GENOMIC DNA]</scope>
    <source>
        <strain>K12 / MG1655 / ATCC 47076</strain>
    </source>
</reference>
<reference key="4">
    <citation type="journal article" date="2006" name="Mol. Syst. Biol.">
        <title>Highly accurate genome sequences of Escherichia coli K-12 strains MG1655 and W3110.</title>
        <authorList>
            <person name="Hayashi K."/>
            <person name="Morooka N."/>
            <person name="Yamamoto Y."/>
            <person name="Fujita K."/>
            <person name="Isono K."/>
            <person name="Choi S."/>
            <person name="Ohtsubo E."/>
            <person name="Baba T."/>
            <person name="Wanner B.L."/>
            <person name="Mori H."/>
            <person name="Horiuchi T."/>
        </authorList>
    </citation>
    <scope>NUCLEOTIDE SEQUENCE [LARGE SCALE GENOMIC DNA]</scope>
    <source>
        <strain>K12 / W3110 / ATCC 27325 / DSM 5911</strain>
    </source>
</reference>
<reference key="5">
    <citation type="journal article" date="2003" name="J. Biol. Chem.">
        <title>Identification of oligomerization and drug-binding domains of the membrane fusion protein EmrA.</title>
        <authorList>
            <person name="Borges-Walmsley M.I."/>
            <person name="Beauchamp J."/>
            <person name="Kelly S.M."/>
            <person name="Jumel K."/>
            <person name="Candlish D."/>
            <person name="Harding S.E."/>
            <person name="Price N.C."/>
            <person name="Walmsley A.R."/>
        </authorList>
    </citation>
    <scope>FUNCTION</scope>
    <scope>SUBUNIT</scope>
</reference>
<reference key="6">
    <citation type="journal article" date="2005" name="Science">
        <title>Global topology analysis of the Escherichia coli inner membrane proteome.</title>
        <authorList>
            <person name="Daley D.O."/>
            <person name="Rapp M."/>
            <person name="Granseth E."/>
            <person name="Melen K."/>
            <person name="Drew D."/>
            <person name="von Heijne G."/>
        </authorList>
    </citation>
    <scope>TOPOLOGY [LARGE SCALE ANALYSIS]</scope>
    <scope>SUBCELLULAR LOCATION</scope>
    <source>
        <strain>K12 / MG1655 / ATCC 47076</strain>
    </source>
</reference>
<reference key="7">
    <citation type="journal article" date="2009" name="Biochem. Biophys. Res. Commun.">
        <title>The multidrug resistance efflux complex, EmrAB from Escherichia coli forms a dimer in vitro.</title>
        <authorList>
            <person name="Tanabe M."/>
            <person name="Szakonyi G."/>
            <person name="Brown K.A."/>
            <person name="Henderson P.J."/>
            <person name="Nield J."/>
            <person name="Byrne B."/>
        </authorList>
    </citation>
    <scope>INTERACTION WITH EMRA</scope>
</reference>
<accession>P0AEJ0</accession>
<accession>P27304</accession>
<accession>P77725</accession>
<comment type="function">
    <text evidence="2 3">Part of the tripartite efflux system EmrAB-TolC, which confers resistance to antibiotics such as CCCP, FCCP, 2,4-dinitrophenol and nalidixic acid.</text>
</comment>
<comment type="subunit">
    <text evidence="2 5">Part of the tripartite efflux system EmrAB-TolC, which is composed of an inner membrane transporter, EmrB, a periplasmic membrane fusion protein, EmrA, and an outer membrane component, TolC. The complex forms a large protein conduit and can translocate molecules across both the inner and outer membranes. Interacts with EmrA. EmrAB complex forms a dimer in vitro.</text>
</comment>
<comment type="interaction">
    <interactant intactId="EBI-21407519">
        <id>P0AEJ0</id>
    </interactant>
    <interactant intactId="EBI-1119547">
        <id>P27303</id>
        <label>emrA</label>
    </interactant>
    <organismsDiffer>false</organismsDiffer>
    <experiments>2</experiments>
</comment>
<comment type="subcellular location">
    <subcellularLocation>
        <location evidence="4">Cell inner membrane</location>
        <topology evidence="4">Multi-pass membrane protein</topology>
    </subcellularLocation>
</comment>
<comment type="similarity">
    <text evidence="6">Belongs to the major facilitator superfamily. EmrB family.</text>
</comment>
<sequence>MQQQKPLEGAQLVIMTIALSLATFMQVLDSTIANVAIPTIAGNLGSSLSQGTWVITSFGVANAISIPLTGWLAKRVGEVKLFLWSTIAFAIASWACGVSSSLNMLIFFRVIQGIVAGPLIPLSQSLLLNNYPPAKRSIALALWSMTVIVAPICGPILGGYISDNYHWGWIFFINVPIGVAVVLMTLQTLRGRETRTERRRIDAVGLALLVIGIGSLQIMLDRGKELDWFSSQEIIILTVVAVVAICFLIVWELTDDNPIVDLSLFKSRNFTIGCLCISLAYMLYFGAIVLLPQLLQEVYGYTATWAGLASAPVGIIPVILSPIIGRFAHKLDMRRLVTFSFIMYAVCFYWRAYTFEPGMDFGASAWPQFIQGFAVACFFMPLTTITLSGLPPERLAAASSLSNFTRTLAGSIGTSITTTMWTNRESMHHAQLTESVNPFNPNAQAMYSQLEGLGMTQQQASGWIAQQITNQGLIISANEIFWMSAGIFLVLLGLVWFAKPPFGAGGGGGGAH</sequence>
<proteinExistence type="evidence at protein level"/>